<protein>
    <recommendedName>
        <fullName evidence="1">Small, acid-soluble spore protein N</fullName>
        <shortName evidence="1">SASP N</shortName>
    </recommendedName>
</protein>
<evidence type="ECO:0000255" key="1">
    <source>
        <dbReference type="HAMAP-Rule" id="MF_01505"/>
    </source>
</evidence>
<evidence type="ECO:0000256" key="2">
    <source>
        <dbReference type="SAM" id="MobiDB-lite"/>
    </source>
</evidence>
<dbReference type="EMBL" id="CP000764">
    <property type="protein sequence ID" value="ABS22507.1"/>
    <property type="molecule type" value="Genomic_DNA"/>
</dbReference>
<dbReference type="RefSeq" id="WP_012094701.1">
    <property type="nucleotide sequence ID" value="NC_009674.1"/>
</dbReference>
<dbReference type="STRING" id="315749.Bcer98_2258"/>
<dbReference type="GeneID" id="33897531"/>
<dbReference type="KEGG" id="bcy:Bcer98_2258"/>
<dbReference type="HOGENOM" id="CLU_216714_0_0_9"/>
<dbReference type="OrthoDB" id="2455637at2"/>
<dbReference type="Proteomes" id="UP000002300">
    <property type="component" value="Chromosome"/>
</dbReference>
<dbReference type="GO" id="GO:0042601">
    <property type="term" value="C:endospore-forming forespore"/>
    <property type="evidence" value="ECO:0007669"/>
    <property type="project" value="InterPro"/>
</dbReference>
<dbReference type="GO" id="GO:0030436">
    <property type="term" value="P:asexual sporulation"/>
    <property type="evidence" value="ECO:0007669"/>
    <property type="project" value="UniProtKB-UniRule"/>
</dbReference>
<dbReference type="GO" id="GO:0030435">
    <property type="term" value="P:sporulation resulting in formation of a cellular spore"/>
    <property type="evidence" value="ECO:0007669"/>
    <property type="project" value="UniProtKB-KW"/>
</dbReference>
<dbReference type="HAMAP" id="MF_01505">
    <property type="entry name" value="SspN"/>
    <property type="match status" value="1"/>
</dbReference>
<dbReference type="InterPro" id="IPR012612">
    <property type="entry name" value="SASP_SspN"/>
</dbReference>
<dbReference type="NCBIfam" id="NF006904">
    <property type="entry name" value="PRK09398.1"/>
    <property type="match status" value="1"/>
</dbReference>
<dbReference type="Pfam" id="PF08177">
    <property type="entry name" value="SspN"/>
    <property type="match status" value="1"/>
</dbReference>
<reference key="1">
    <citation type="journal article" date="2008" name="Chem. Biol. Interact.">
        <title>Extending the Bacillus cereus group genomics to putative food-borne pathogens of different toxicity.</title>
        <authorList>
            <person name="Lapidus A."/>
            <person name="Goltsman E."/>
            <person name="Auger S."/>
            <person name="Galleron N."/>
            <person name="Segurens B."/>
            <person name="Dossat C."/>
            <person name="Land M.L."/>
            <person name="Broussolle V."/>
            <person name="Brillard J."/>
            <person name="Guinebretiere M.-H."/>
            <person name="Sanchis V."/>
            <person name="Nguen-the C."/>
            <person name="Lereclus D."/>
            <person name="Richardson P."/>
            <person name="Wincker P."/>
            <person name="Weissenbach J."/>
            <person name="Ehrlich S.D."/>
            <person name="Sorokin A."/>
        </authorList>
    </citation>
    <scope>NUCLEOTIDE SEQUENCE [LARGE SCALE GENOMIC DNA]</scope>
    <source>
        <strain>DSM 22905 / CIP 110041 / 391-98 / NVH 391-98</strain>
    </source>
</reference>
<sequence>MGNPKKNSKDFVPNHIGTQSKKAGGNKGKQMQDTTGKQPIVDNG</sequence>
<gene>
    <name evidence="1" type="primary">sspN</name>
    <name type="ordered locus">Bcer98_2258</name>
</gene>
<keyword id="KW-0749">Sporulation</keyword>
<name>SSPN_BACCN</name>
<accession>A7GQU9</accession>
<comment type="subcellular location">
    <subcellularLocation>
        <location evidence="1">Spore core</location>
    </subcellularLocation>
</comment>
<comment type="induction">
    <text evidence="1">Expressed only in the forespore compartment of sporulating cells.</text>
</comment>
<comment type="similarity">
    <text evidence="1">Belongs to the SspN family.</text>
</comment>
<proteinExistence type="inferred from homology"/>
<feature type="chain" id="PRO_0000329203" description="Small, acid-soluble spore protein N">
    <location>
        <begin position="1"/>
        <end position="44"/>
    </location>
</feature>
<feature type="region of interest" description="Disordered" evidence="2">
    <location>
        <begin position="1"/>
        <end position="44"/>
    </location>
</feature>
<organism>
    <name type="scientific">Bacillus cytotoxicus (strain DSM 22905 / CIP 110041 / 391-98 / NVH 391-98)</name>
    <dbReference type="NCBI Taxonomy" id="315749"/>
    <lineage>
        <taxon>Bacteria</taxon>
        <taxon>Bacillati</taxon>
        <taxon>Bacillota</taxon>
        <taxon>Bacilli</taxon>
        <taxon>Bacillales</taxon>
        <taxon>Bacillaceae</taxon>
        <taxon>Bacillus</taxon>
        <taxon>Bacillus cereus group</taxon>
    </lineage>
</organism>